<reference key="1">
    <citation type="journal article" date="2009" name="Genome Biol.">
        <title>Genomic and genetic analyses of diversity and plant interactions of Pseudomonas fluorescens.</title>
        <authorList>
            <person name="Silby M.W."/>
            <person name="Cerdeno-Tarraga A.M."/>
            <person name="Vernikos G.S."/>
            <person name="Giddens S.R."/>
            <person name="Jackson R.W."/>
            <person name="Preston G.M."/>
            <person name="Zhang X.-X."/>
            <person name="Moon C.D."/>
            <person name="Gehrig S.M."/>
            <person name="Godfrey S.A.C."/>
            <person name="Knight C.G."/>
            <person name="Malone J.G."/>
            <person name="Robinson Z."/>
            <person name="Spiers A.J."/>
            <person name="Harris S."/>
            <person name="Challis G.L."/>
            <person name="Yaxley A.M."/>
            <person name="Harris D."/>
            <person name="Seeger K."/>
            <person name="Murphy L."/>
            <person name="Rutter S."/>
            <person name="Squares R."/>
            <person name="Quail M.A."/>
            <person name="Saunders E."/>
            <person name="Mavromatis K."/>
            <person name="Brettin T.S."/>
            <person name="Bentley S.D."/>
            <person name="Hothersall J."/>
            <person name="Stephens E."/>
            <person name="Thomas C.M."/>
            <person name="Parkhill J."/>
            <person name="Levy S.B."/>
            <person name="Rainey P.B."/>
            <person name="Thomson N.R."/>
        </authorList>
    </citation>
    <scope>NUCLEOTIDE SEQUENCE [LARGE SCALE GENOMIC DNA]</scope>
    <source>
        <strain>Pf0-1</strain>
    </source>
</reference>
<name>BETA_PSEPF</name>
<sequence>MSQEFDYIIVGAGSAGNTLATRLTEDEGVTVLLLEAGGPDYRFDFRTQMPAALAFPLQGRRYNWAYETDPEPHMDGRRMECGRGKGLGGSSLINGMCYIRGNAMDYDGWAKLPGLEDWSYLDCLPYFRKAETRDIGPNDYHGGDGPVSVTTPKAGNNPLFHAMVEAGVQAGYPRTEDLNGYQQEGFGPMDRTVTPNGRRASTARGYLDVAKKRSTLTIVTHALTDKVLFEGKRAVGVRYLVGAAEERVEARARKEVIVCSGAIASPQLLQRSGVGPAKLLESLDIPVVHDLPGVGENLQDHLELYLQYACTQPVSLYPSLLWYNQPAIGAEWLFNGTGIGASNQFEAGGFIRTRPEFEWPNIQYHFLPVAINYNGSNGVKEHGFQAHMGSMRSPSRGRVQVKSKDPRQHPSILFNYMATEQDWQEFRDGIRLTREIMQQPALDAFRGREISPGIEVQTDEQLDKFIREHAETAFHPSCSCKMGTDDMAVVDGEGRVHGMQGLRVVDASIMPIITTGNLNAPTIMMAEKIADKIRGRQPLPRSKAPYYVAGDAPVKGKAMRDVSAVAQ</sequence>
<dbReference type="EC" id="1.1.99.1" evidence="1"/>
<dbReference type="EC" id="1.2.1.8" evidence="1"/>
<dbReference type="EMBL" id="CP000094">
    <property type="protein sequence ID" value="ABA76981.1"/>
    <property type="molecule type" value="Genomic_DNA"/>
</dbReference>
<dbReference type="RefSeq" id="WP_011336307.1">
    <property type="nucleotide sequence ID" value="NC_007492.2"/>
</dbReference>
<dbReference type="SMR" id="Q3K5H3"/>
<dbReference type="KEGG" id="pfo:Pfl01_5244"/>
<dbReference type="eggNOG" id="COG2303">
    <property type="taxonomic scope" value="Bacteria"/>
</dbReference>
<dbReference type="HOGENOM" id="CLU_002865_7_1_6"/>
<dbReference type="UniPathway" id="UPA00529">
    <property type="reaction ID" value="UER00385"/>
</dbReference>
<dbReference type="Proteomes" id="UP000002704">
    <property type="component" value="Chromosome"/>
</dbReference>
<dbReference type="GO" id="GO:0016020">
    <property type="term" value="C:membrane"/>
    <property type="evidence" value="ECO:0007669"/>
    <property type="project" value="TreeGrafter"/>
</dbReference>
<dbReference type="GO" id="GO:0008802">
    <property type="term" value="F:betaine-aldehyde dehydrogenase (NAD+) activity"/>
    <property type="evidence" value="ECO:0007669"/>
    <property type="project" value="UniProtKB-EC"/>
</dbReference>
<dbReference type="GO" id="GO:0008812">
    <property type="term" value="F:choline dehydrogenase activity"/>
    <property type="evidence" value="ECO:0007669"/>
    <property type="project" value="UniProtKB-UniRule"/>
</dbReference>
<dbReference type="GO" id="GO:0050660">
    <property type="term" value="F:flavin adenine dinucleotide binding"/>
    <property type="evidence" value="ECO:0007669"/>
    <property type="project" value="InterPro"/>
</dbReference>
<dbReference type="GO" id="GO:0019285">
    <property type="term" value="P:glycine betaine biosynthetic process from choline"/>
    <property type="evidence" value="ECO:0007669"/>
    <property type="project" value="UniProtKB-UniRule"/>
</dbReference>
<dbReference type="Gene3D" id="3.50.50.60">
    <property type="entry name" value="FAD/NAD(P)-binding domain"/>
    <property type="match status" value="1"/>
</dbReference>
<dbReference type="Gene3D" id="3.30.560.10">
    <property type="entry name" value="Glucose Oxidase, domain 3"/>
    <property type="match status" value="1"/>
</dbReference>
<dbReference type="HAMAP" id="MF_00750">
    <property type="entry name" value="Choline_dehydrogen"/>
    <property type="match status" value="1"/>
</dbReference>
<dbReference type="InterPro" id="IPR011533">
    <property type="entry name" value="BetA"/>
</dbReference>
<dbReference type="InterPro" id="IPR036188">
    <property type="entry name" value="FAD/NAD-bd_sf"/>
</dbReference>
<dbReference type="InterPro" id="IPR012132">
    <property type="entry name" value="GMC_OxRdtase"/>
</dbReference>
<dbReference type="InterPro" id="IPR000172">
    <property type="entry name" value="GMC_OxRdtase_N"/>
</dbReference>
<dbReference type="InterPro" id="IPR007867">
    <property type="entry name" value="GMC_OxRtase_C"/>
</dbReference>
<dbReference type="NCBIfam" id="TIGR01810">
    <property type="entry name" value="betA"/>
    <property type="match status" value="1"/>
</dbReference>
<dbReference type="NCBIfam" id="NF002550">
    <property type="entry name" value="PRK02106.1"/>
    <property type="match status" value="1"/>
</dbReference>
<dbReference type="PANTHER" id="PTHR11552:SF147">
    <property type="entry name" value="CHOLINE DEHYDROGENASE, MITOCHONDRIAL"/>
    <property type="match status" value="1"/>
</dbReference>
<dbReference type="PANTHER" id="PTHR11552">
    <property type="entry name" value="GLUCOSE-METHANOL-CHOLINE GMC OXIDOREDUCTASE"/>
    <property type="match status" value="1"/>
</dbReference>
<dbReference type="Pfam" id="PF05199">
    <property type="entry name" value="GMC_oxred_C"/>
    <property type="match status" value="1"/>
</dbReference>
<dbReference type="Pfam" id="PF00732">
    <property type="entry name" value="GMC_oxred_N"/>
    <property type="match status" value="1"/>
</dbReference>
<dbReference type="PIRSF" id="PIRSF000137">
    <property type="entry name" value="Alcohol_oxidase"/>
    <property type="match status" value="1"/>
</dbReference>
<dbReference type="SUPFAM" id="SSF54373">
    <property type="entry name" value="FAD-linked reductases, C-terminal domain"/>
    <property type="match status" value="1"/>
</dbReference>
<dbReference type="SUPFAM" id="SSF51905">
    <property type="entry name" value="FAD/NAD(P)-binding domain"/>
    <property type="match status" value="1"/>
</dbReference>
<dbReference type="PROSITE" id="PS00623">
    <property type="entry name" value="GMC_OXRED_1"/>
    <property type="match status" value="1"/>
</dbReference>
<dbReference type="PROSITE" id="PS00624">
    <property type="entry name" value="GMC_OXRED_2"/>
    <property type="match status" value="1"/>
</dbReference>
<feature type="chain" id="PRO_0000258929" description="Oxygen-dependent choline dehydrogenase">
    <location>
        <begin position="1"/>
        <end position="567"/>
    </location>
</feature>
<feature type="active site" description="Proton acceptor" evidence="1">
    <location>
        <position position="475"/>
    </location>
</feature>
<feature type="binding site" evidence="1">
    <location>
        <begin position="6"/>
        <end position="35"/>
    </location>
    <ligand>
        <name>FAD</name>
        <dbReference type="ChEBI" id="CHEBI:57692"/>
    </ligand>
</feature>
<keyword id="KW-0274">FAD</keyword>
<keyword id="KW-0285">Flavoprotein</keyword>
<keyword id="KW-0520">NAD</keyword>
<keyword id="KW-0560">Oxidoreductase</keyword>
<proteinExistence type="inferred from homology"/>
<organism>
    <name type="scientific">Pseudomonas fluorescens (strain Pf0-1)</name>
    <dbReference type="NCBI Taxonomy" id="205922"/>
    <lineage>
        <taxon>Bacteria</taxon>
        <taxon>Pseudomonadati</taxon>
        <taxon>Pseudomonadota</taxon>
        <taxon>Gammaproteobacteria</taxon>
        <taxon>Pseudomonadales</taxon>
        <taxon>Pseudomonadaceae</taxon>
        <taxon>Pseudomonas</taxon>
    </lineage>
</organism>
<comment type="function">
    <text evidence="1">Involved in the biosynthesis of the osmoprotectant glycine betaine. Catalyzes the oxidation of choline to betaine aldehyde and betaine aldehyde to glycine betaine at the same rate.</text>
</comment>
<comment type="catalytic activity">
    <reaction evidence="1">
        <text>choline + A = betaine aldehyde + AH2</text>
        <dbReference type="Rhea" id="RHEA:17433"/>
        <dbReference type="ChEBI" id="CHEBI:13193"/>
        <dbReference type="ChEBI" id="CHEBI:15354"/>
        <dbReference type="ChEBI" id="CHEBI:15710"/>
        <dbReference type="ChEBI" id="CHEBI:17499"/>
        <dbReference type="EC" id="1.1.99.1"/>
    </reaction>
</comment>
<comment type="catalytic activity">
    <reaction evidence="1">
        <text>betaine aldehyde + NAD(+) + H2O = glycine betaine + NADH + 2 H(+)</text>
        <dbReference type="Rhea" id="RHEA:15305"/>
        <dbReference type="ChEBI" id="CHEBI:15377"/>
        <dbReference type="ChEBI" id="CHEBI:15378"/>
        <dbReference type="ChEBI" id="CHEBI:15710"/>
        <dbReference type="ChEBI" id="CHEBI:17750"/>
        <dbReference type="ChEBI" id="CHEBI:57540"/>
        <dbReference type="ChEBI" id="CHEBI:57945"/>
        <dbReference type="EC" id="1.2.1.8"/>
    </reaction>
</comment>
<comment type="cofactor">
    <cofactor evidence="1">
        <name>FAD</name>
        <dbReference type="ChEBI" id="CHEBI:57692"/>
    </cofactor>
</comment>
<comment type="pathway">
    <text evidence="1">Amine and polyamine biosynthesis; betaine biosynthesis via choline pathway; betaine aldehyde from choline (cytochrome c reductase route): step 1/1.</text>
</comment>
<comment type="similarity">
    <text evidence="1">Belongs to the GMC oxidoreductase family.</text>
</comment>
<accession>Q3K5H3</accession>
<protein>
    <recommendedName>
        <fullName evidence="1">Oxygen-dependent choline dehydrogenase</fullName>
        <shortName evidence="1">CDH</shortName>
        <shortName evidence="1">CHD</shortName>
        <ecNumber evidence="1">1.1.99.1</ecNumber>
    </recommendedName>
    <alternativeName>
        <fullName evidence="1">Betaine aldehyde dehydrogenase</fullName>
        <shortName evidence="1">BADH</shortName>
        <ecNumber evidence="1">1.2.1.8</ecNumber>
    </alternativeName>
</protein>
<gene>
    <name evidence="1" type="primary">betA</name>
    <name type="ordered locus">Pfl01_5244</name>
</gene>
<evidence type="ECO:0000255" key="1">
    <source>
        <dbReference type="HAMAP-Rule" id="MF_00750"/>
    </source>
</evidence>